<reference key="1">
    <citation type="journal article" date="2009" name="J. Bacteriol.">
        <title>Complete genome sequence and comparative genome analysis of enteropathogenic Escherichia coli O127:H6 strain E2348/69.</title>
        <authorList>
            <person name="Iguchi A."/>
            <person name="Thomson N.R."/>
            <person name="Ogura Y."/>
            <person name="Saunders D."/>
            <person name="Ooka T."/>
            <person name="Henderson I.R."/>
            <person name="Harris D."/>
            <person name="Asadulghani M."/>
            <person name="Kurokawa K."/>
            <person name="Dean P."/>
            <person name="Kenny B."/>
            <person name="Quail M.A."/>
            <person name="Thurston S."/>
            <person name="Dougan G."/>
            <person name="Hayashi T."/>
            <person name="Parkhill J."/>
            <person name="Frankel G."/>
        </authorList>
    </citation>
    <scope>NUCLEOTIDE SEQUENCE [LARGE SCALE GENOMIC DNA]</scope>
    <source>
        <strain>E2348/69 / EPEC</strain>
    </source>
</reference>
<protein>
    <recommendedName>
        <fullName evidence="1">Sulfur carrier protein TusA</fullName>
    </recommendedName>
    <alternativeName>
        <fullName evidence="1">Sulfur mediator TusA</fullName>
    </alternativeName>
    <alternativeName>
        <fullName evidence="1">Sulfur transfer protein TusA</fullName>
    </alternativeName>
    <alternativeName>
        <fullName evidence="1">tRNA 2-thiouridine synthesizing protein A</fullName>
    </alternativeName>
</protein>
<keyword id="KW-0963">Cytoplasm</keyword>
<keyword id="KW-1185">Reference proteome</keyword>
<keyword id="KW-0819">tRNA processing</keyword>
<organism>
    <name type="scientific">Escherichia coli O127:H6 (strain E2348/69 / EPEC)</name>
    <dbReference type="NCBI Taxonomy" id="574521"/>
    <lineage>
        <taxon>Bacteria</taxon>
        <taxon>Pseudomonadati</taxon>
        <taxon>Pseudomonadota</taxon>
        <taxon>Gammaproteobacteria</taxon>
        <taxon>Enterobacterales</taxon>
        <taxon>Enterobacteriaceae</taxon>
        <taxon>Escherichia</taxon>
    </lineage>
</organism>
<accession>B7UL22</accession>
<comment type="function">
    <text evidence="1">Sulfur carrier protein involved in sulfur trafficking in the cell. Part of a sulfur-relay system required for 2-thiolation during synthesis of 2-thiouridine of the modified wobble base 5-methylaminomethyl-2-thiouridine (mnm(5)s(2)U) in tRNA. Interacts with IscS and stimulates its cysteine desulfurase activity. Accepts an activated sulfur from IscS, which is then transferred to TusD, and thus determines the direction of sulfur flow from IscS to 2-thiouridine formation. Also appears to be involved in sulfur transfer for the biosynthesis of molybdopterin.</text>
</comment>
<comment type="pathway">
    <text evidence="1">tRNA modification.</text>
</comment>
<comment type="subunit">
    <text evidence="1">Interacts with IscS.</text>
</comment>
<comment type="subcellular location">
    <subcellularLocation>
        <location evidence="1">Cytoplasm</location>
    </subcellularLocation>
</comment>
<comment type="similarity">
    <text evidence="1">Belongs to the sulfur carrier protein TusA family.</text>
</comment>
<name>TUSA_ECO27</name>
<gene>
    <name evidence="1" type="primary">tusA</name>
    <name type="ordered locus">E2348C_3711</name>
</gene>
<proteinExistence type="inferred from homology"/>
<sequence length="81" mass="9095">MTDLFSSPDHTLDALGLRCPEPVMMVRKTVRNMQPGETLLIIADDPATTRDIPGFCTFMEHELVAKETDGLPYRYLIRKGG</sequence>
<dbReference type="EMBL" id="FM180568">
    <property type="protein sequence ID" value="CAS11259.1"/>
    <property type="molecule type" value="Genomic_DNA"/>
</dbReference>
<dbReference type="RefSeq" id="WP_000130621.1">
    <property type="nucleotide sequence ID" value="NC_011601.1"/>
</dbReference>
<dbReference type="SMR" id="B7UL22"/>
<dbReference type="GeneID" id="93778521"/>
<dbReference type="KEGG" id="ecg:E2348C_3711"/>
<dbReference type="HOGENOM" id="CLU_165255_5_0_6"/>
<dbReference type="Proteomes" id="UP000008205">
    <property type="component" value="Chromosome"/>
</dbReference>
<dbReference type="GO" id="GO:0005737">
    <property type="term" value="C:cytoplasm"/>
    <property type="evidence" value="ECO:0007669"/>
    <property type="project" value="UniProtKB-SubCell"/>
</dbReference>
<dbReference type="GO" id="GO:0097163">
    <property type="term" value="F:sulfur carrier activity"/>
    <property type="evidence" value="ECO:0007669"/>
    <property type="project" value="UniProtKB-UniRule"/>
</dbReference>
<dbReference type="GO" id="GO:0002143">
    <property type="term" value="P:tRNA wobble position uridine thiolation"/>
    <property type="evidence" value="ECO:0007669"/>
    <property type="project" value="InterPro"/>
</dbReference>
<dbReference type="CDD" id="cd03423">
    <property type="entry name" value="SirA"/>
    <property type="match status" value="1"/>
</dbReference>
<dbReference type="FunFam" id="3.30.110.40:FF:000002">
    <property type="entry name" value="Sulfur carrier protein TusA"/>
    <property type="match status" value="1"/>
</dbReference>
<dbReference type="Gene3D" id="3.30.110.40">
    <property type="entry name" value="TusA-like domain"/>
    <property type="match status" value="1"/>
</dbReference>
<dbReference type="HAMAP" id="MF_00413">
    <property type="entry name" value="Thiourid_synth_A"/>
    <property type="match status" value="1"/>
</dbReference>
<dbReference type="InterPro" id="IPR022931">
    <property type="entry name" value="Sulphur_carrier_TusA"/>
</dbReference>
<dbReference type="InterPro" id="IPR001455">
    <property type="entry name" value="TusA-like"/>
</dbReference>
<dbReference type="InterPro" id="IPR036868">
    <property type="entry name" value="TusA-like_sf"/>
</dbReference>
<dbReference type="NCBIfam" id="NF001423">
    <property type="entry name" value="PRK00299.1"/>
    <property type="match status" value="1"/>
</dbReference>
<dbReference type="PANTHER" id="PTHR33279:SF2">
    <property type="entry name" value="SULFUR CARRIER PROTEIN TUSA"/>
    <property type="match status" value="1"/>
</dbReference>
<dbReference type="PANTHER" id="PTHR33279">
    <property type="entry name" value="SULFUR CARRIER PROTEIN YEDF-RELATED"/>
    <property type="match status" value="1"/>
</dbReference>
<dbReference type="Pfam" id="PF01206">
    <property type="entry name" value="TusA"/>
    <property type="match status" value="1"/>
</dbReference>
<dbReference type="SUPFAM" id="SSF64307">
    <property type="entry name" value="SirA-like"/>
    <property type="match status" value="1"/>
</dbReference>
<dbReference type="PROSITE" id="PS01148">
    <property type="entry name" value="UPF0033"/>
    <property type="match status" value="1"/>
</dbReference>
<feature type="chain" id="PRO_1000199915" description="Sulfur carrier protein TusA">
    <location>
        <begin position="1"/>
        <end position="81"/>
    </location>
</feature>
<feature type="active site" description="Cysteine persulfide intermediate" evidence="1">
    <location>
        <position position="19"/>
    </location>
</feature>
<evidence type="ECO:0000255" key="1">
    <source>
        <dbReference type="HAMAP-Rule" id="MF_00413"/>
    </source>
</evidence>